<feature type="chain" id="PRO_0000191570" description="Sperm protamine P1">
    <location>
        <begin position="1"/>
        <end position="63"/>
    </location>
</feature>
<feature type="region of interest" description="Disordered" evidence="2">
    <location>
        <begin position="1"/>
        <end position="63"/>
    </location>
</feature>
<protein>
    <recommendedName>
        <fullName>Sperm protamine P1</fullName>
    </recommendedName>
</protein>
<proteinExistence type="evidence at transcript level"/>
<keyword id="KW-0158">Chromosome</keyword>
<keyword id="KW-0217">Developmental protein</keyword>
<keyword id="KW-0221">Differentiation</keyword>
<keyword id="KW-0226">DNA condensation</keyword>
<keyword id="KW-0238">DNA-binding</keyword>
<keyword id="KW-0544">Nucleosome core</keyword>
<keyword id="KW-0539">Nucleus</keyword>
<keyword id="KW-0744">Spermatogenesis</keyword>
<reference key="1">
    <citation type="journal article" date="1997" name="Mol. Phylogenet. Evol.">
        <title>A multigene assessment of phylogenetic relationships within the dasyurid marsupial subfamily Sminthopsinae.</title>
        <authorList>
            <person name="Krajewski C."/>
            <person name="Blacket M."/>
            <person name="Buckley L."/>
            <person name="Westerman M."/>
        </authorList>
    </citation>
    <scope>NUCLEOTIDE SEQUENCE [GENOMIC DNA]</scope>
</reference>
<accession>Q71VP8</accession>
<name>HSP1_SMIMA</name>
<dbReference type="EMBL" id="AF001586">
    <property type="protein sequence ID" value="AAB91376.1"/>
    <property type="molecule type" value="Genomic_DNA"/>
</dbReference>
<dbReference type="GO" id="GO:0000786">
    <property type="term" value="C:nucleosome"/>
    <property type="evidence" value="ECO:0007669"/>
    <property type="project" value="UniProtKB-KW"/>
</dbReference>
<dbReference type="GO" id="GO:0005634">
    <property type="term" value="C:nucleus"/>
    <property type="evidence" value="ECO:0007669"/>
    <property type="project" value="UniProtKB-SubCell"/>
</dbReference>
<dbReference type="GO" id="GO:0003677">
    <property type="term" value="F:DNA binding"/>
    <property type="evidence" value="ECO:0007669"/>
    <property type="project" value="UniProtKB-KW"/>
</dbReference>
<dbReference type="GO" id="GO:0030261">
    <property type="term" value="P:chromosome condensation"/>
    <property type="evidence" value="ECO:0007669"/>
    <property type="project" value="UniProtKB-KW"/>
</dbReference>
<dbReference type="GO" id="GO:0035092">
    <property type="term" value="P:sperm DNA condensation"/>
    <property type="evidence" value="ECO:0007669"/>
    <property type="project" value="InterPro"/>
</dbReference>
<dbReference type="InterPro" id="IPR000221">
    <property type="entry name" value="Protamine_P1"/>
</dbReference>
<dbReference type="PROSITE" id="PS00048">
    <property type="entry name" value="PROTAMINE_P1"/>
    <property type="match status" value="1"/>
</dbReference>
<sequence>MARYRRHSRSRSRSRYRRRRRRRSRHHNRRRTYRRSRRHSRRRRGRRRGYSRRRYSRRGRRRY</sequence>
<gene>
    <name type="primary">PRM1</name>
</gene>
<comment type="function">
    <text evidence="1">Protamines substitute for histones in the chromatin of sperm during the haploid phase of spermatogenesis. They compact sperm DNA into a highly condensed, stable and inactive complex (By similarity).</text>
</comment>
<comment type="subcellular location">
    <subcellularLocation>
        <location evidence="1">Nucleus</location>
    </subcellularLocation>
    <subcellularLocation>
        <location evidence="1">Chromosome</location>
    </subcellularLocation>
</comment>
<comment type="tissue specificity">
    <text>Testis.</text>
</comment>
<comment type="similarity">
    <text evidence="3">Belongs to the protamine P1 family.</text>
</comment>
<organism>
    <name type="scientific">Sminthopsis macroura</name>
    <name type="common">Stripe-faced dunnart</name>
    <dbReference type="NCBI Taxonomy" id="9302"/>
    <lineage>
        <taxon>Eukaryota</taxon>
        <taxon>Metazoa</taxon>
        <taxon>Chordata</taxon>
        <taxon>Craniata</taxon>
        <taxon>Vertebrata</taxon>
        <taxon>Euteleostomi</taxon>
        <taxon>Mammalia</taxon>
        <taxon>Metatheria</taxon>
        <taxon>Dasyuromorphia</taxon>
        <taxon>Dasyuridae</taxon>
        <taxon>Sminthopsis</taxon>
    </lineage>
</organism>
<evidence type="ECO:0000250" key="1"/>
<evidence type="ECO:0000256" key="2">
    <source>
        <dbReference type="SAM" id="MobiDB-lite"/>
    </source>
</evidence>
<evidence type="ECO:0000305" key="3"/>